<protein>
    <recommendedName>
        <fullName evidence="7">Omega-conotoxin-like Am6.2</fullName>
    </recommendedName>
    <alternativeName>
        <fullName evidence="6">Am3136</fullName>
    </alternativeName>
    <alternativeName>
        <fullName evidence="6">Am3214</fullName>
    </alternativeName>
    <alternativeName>
        <fullName evidence="6">Am6.2a</fullName>
    </alternativeName>
    <alternativeName>
        <fullName evidence="6">Am6.2b</fullName>
    </alternativeName>
</protein>
<accession>A0A2L2P6T9</accession>
<reference key="1">
    <citation type="journal article" date="2019" name="J. Proteomics">
        <title>Cone snail prolyl-4-hydroxylase alpha-subunit sequences derived from transcriptomic data and mass spectrometric analysis of variable proline hydroxylation in C. amadis venom.</title>
        <authorList>
            <person name="Vijayasarathy M."/>
            <person name="Balaram P."/>
        </authorList>
    </citation>
    <scope>NUCLEOTIDE SEQUENCE [GENOMIC DNA / MRNA]</scope>
    <scope>PROTEIN SEQUENCE OF 53-82</scope>
    <scope>SUBCELLULAR LOCATION</scope>
    <scope>IDENTIFICATION BY MASS SPECTROMETRY</scope>
    <source>
        <tissue>Venom</tissue>
        <tissue>Venom duct</tissue>
    </source>
</reference>
<reference key="2">
    <citation type="journal article" date="2018" name="Toxicon">
        <title>Mass spectrometric identification of bromotryptophan containing conotoxin sequences from the venom of C.amadis.</title>
        <authorList>
            <person name="Vijayasarathy M."/>
            <person name="Balaram P."/>
        </authorList>
    </citation>
    <scope>NUCLEOTIDE SEQUENCE [GENOMIC DNA / MRNA]</scope>
    <scope>PROTEIN SEQUENCE OF 53-82</scope>
    <scope>PARTIAL BROMINATION AT TRP-76</scope>
    <scope>SUBCELLULAR LOCATION</scope>
    <scope>IDENTIFICATION BY MASS SPECTROMETRY</scope>
    <source>
        <tissue>Venom</tissue>
        <tissue>Venom duct</tissue>
    </source>
</reference>
<feature type="signal peptide" evidence="3">
    <location>
        <begin position="1"/>
        <end position="22"/>
    </location>
</feature>
<feature type="propeptide" id="PRO_0000453599" evidence="8 9">
    <location>
        <begin position="23"/>
        <end position="52"/>
    </location>
</feature>
<feature type="peptide" id="PRO_5014869467" description="Omega-conotoxin-like Am6.2" evidence="4 5">
    <location>
        <begin position="53"/>
        <end position="82"/>
    </location>
</feature>
<feature type="modified residue" description="6'-bromotryptophan; partial; in Am6.2b (major form)" evidence="4">
    <location>
        <position position="76"/>
    </location>
</feature>
<feature type="disulfide bond" evidence="2">
    <location>
        <begin position="56"/>
        <end position="73"/>
    </location>
</feature>
<feature type="disulfide bond" evidence="2">
    <location>
        <begin position="63"/>
        <end position="77"/>
    </location>
</feature>
<feature type="disulfide bond" evidence="2">
    <location>
        <begin position="72"/>
        <end position="81"/>
    </location>
</feature>
<name>O162_CONAA</name>
<organism>
    <name type="scientific">Conus amadis</name>
    <name type="common">Amadis cone</name>
    <dbReference type="NCBI Taxonomy" id="198732"/>
    <lineage>
        <taxon>Eukaryota</taxon>
        <taxon>Metazoa</taxon>
        <taxon>Spiralia</taxon>
        <taxon>Lophotrochozoa</taxon>
        <taxon>Mollusca</taxon>
        <taxon>Gastropoda</taxon>
        <taxon>Caenogastropoda</taxon>
        <taxon>Neogastropoda</taxon>
        <taxon>Conoidea</taxon>
        <taxon>Conidae</taxon>
        <taxon>Conus</taxon>
        <taxon>Leptoconus</taxon>
    </lineage>
</organism>
<evidence type="ECO:0000250" key="1">
    <source>
        <dbReference type="UniProtKB" id="P56713"/>
    </source>
</evidence>
<evidence type="ECO:0000250" key="2">
    <source>
        <dbReference type="UniProtKB" id="Q26443"/>
    </source>
</evidence>
<evidence type="ECO:0000255" key="3"/>
<evidence type="ECO:0000269" key="4">
    <source>
    </source>
</evidence>
<evidence type="ECO:0000269" key="5">
    <source>
    </source>
</evidence>
<evidence type="ECO:0000303" key="6">
    <source>
    </source>
</evidence>
<evidence type="ECO:0000305" key="7"/>
<evidence type="ECO:0000305" key="8">
    <source>
    </source>
</evidence>
<evidence type="ECO:0000305" key="9">
    <source>
    </source>
</evidence>
<sequence length="82" mass="9139">MKLTCMMIVAVLFLTAWTFVTAVPHSSNVLENLYLKARHEMENQEASKLNMRDDDCEPPGNFCGFPKIGGPCCSGWCFFACA</sequence>
<keyword id="KW-0102">Bromination</keyword>
<keyword id="KW-0108">Calcium channel impairing toxin</keyword>
<keyword id="KW-0903">Direct protein sequencing</keyword>
<keyword id="KW-1015">Disulfide bond</keyword>
<keyword id="KW-0872">Ion channel impairing toxin</keyword>
<keyword id="KW-0960">Knottin</keyword>
<keyword id="KW-0964">Secreted</keyword>
<keyword id="KW-0732">Signal</keyword>
<keyword id="KW-0800">Toxin</keyword>
<dbReference type="EMBL" id="MG721536">
    <property type="protein sequence ID" value="AVH76829.1"/>
    <property type="molecule type" value="Genomic_DNA"/>
</dbReference>
<dbReference type="SMR" id="A0A2L2P6T9"/>
<dbReference type="GO" id="GO:0005576">
    <property type="term" value="C:extracellular region"/>
    <property type="evidence" value="ECO:0007669"/>
    <property type="project" value="UniProtKB-SubCell"/>
</dbReference>
<dbReference type="GO" id="GO:0005246">
    <property type="term" value="F:calcium channel regulator activity"/>
    <property type="evidence" value="ECO:0007669"/>
    <property type="project" value="UniProtKB-KW"/>
</dbReference>
<dbReference type="GO" id="GO:0008200">
    <property type="term" value="F:ion channel inhibitor activity"/>
    <property type="evidence" value="ECO:0007669"/>
    <property type="project" value="InterPro"/>
</dbReference>
<dbReference type="GO" id="GO:0090729">
    <property type="term" value="F:toxin activity"/>
    <property type="evidence" value="ECO:0007669"/>
    <property type="project" value="UniProtKB-KW"/>
</dbReference>
<dbReference type="InterPro" id="IPR004214">
    <property type="entry name" value="Conotoxin"/>
</dbReference>
<dbReference type="InterPro" id="IPR012321">
    <property type="entry name" value="Conotoxin_omega-typ_CS"/>
</dbReference>
<dbReference type="Pfam" id="PF02950">
    <property type="entry name" value="Conotoxin"/>
    <property type="match status" value="1"/>
</dbReference>
<dbReference type="PROSITE" id="PS60004">
    <property type="entry name" value="OMEGA_CONOTOXIN"/>
    <property type="match status" value="1"/>
</dbReference>
<proteinExistence type="evidence at protein level"/>
<comment type="function">
    <text evidence="1">Omega-conotoxins act at presynaptic membranes, they bind and block voltage-gated calcium channels (Cav).</text>
</comment>
<comment type="subcellular location">
    <subcellularLocation>
        <location evidence="5">Secreted</location>
    </subcellularLocation>
</comment>
<comment type="tissue specificity">
    <text evidence="9">Expressed by the venom duct.</text>
</comment>
<comment type="domain">
    <text evidence="7">The cysteine framework is VI/VII (C-C-CC-C-C).</text>
</comment>
<comment type="domain">
    <text evidence="7">The presence of a 'disulfide through disulfide knot' structurally defines this protein as a knottin.</text>
</comment>
<comment type="PTM">
    <text evidence="5">Mostly non-hydroxylated.</text>
</comment>
<comment type="PTM">
    <text evidence="4">Two forms of this peptides have been described. Am6.2a (Am3136) is not unmodified, while Am6.2b (Am3214) is Trp-76 brominated. Both forms are found in venom with a much more abundant brominated form.</text>
</comment>
<comment type="similarity">
    <text evidence="7">Belongs to the conotoxin O1 family.</text>
</comment>